<sequence>MAHKKGVGSTRNGRDSESKRLGCKKYGGENVKAGNIIYRQRGTQIHPGTNVGCGKDYTLFALIDGVVKFERLGRDRKKVSVYPAS</sequence>
<accession>Q39QR5</accession>
<dbReference type="EMBL" id="CP000148">
    <property type="protein sequence ID" value="ABB33409.1"/>
    <property type="molecule type" value="Genomic_DNA"/>
</dbReference>
<dbReference type="RefSeq" id="WP_004512634.1">
    <property type="nucleotide sequence ID" value="NC_007517.1"/>
</dbReference>
<dbReference type="SMR" id="Q39QR5"/>
<dbReference type="STRING" id="269799.Gmet_3196"/>
<dbReference type="KEGG" id="gme:Gmet_3196"/>
<dbReference type="eggNOG" id="COG0211">
    <property type="taxonomic scope" value="Bacteria"/>
</dbReference>
<dbReference type="HOGENOM" id="CLU_095424_4_0_7"/>
<dbReference type="Proteomes" id="UP000007073">
    <property type="component" value="Chromosome"/>
</dbReference>
<dbReference type="GO" id="GO:0022625">
    <property type="term" value="C:cytosolic large ribosomal subunit"/>
    <property type="evidence" value="ECO:0007669"/>
    <property type="project" value="TreeGrafter"/>
</dbReference>
<dbReference type="GO" id="GO:0003735">
    <property type="term" value="F:structural constituent of ribosome"/>
    <property type="evidence" value="ECO:0007669"/>
    <property type="project" value="InterPro"/>
</dbReference>
<dbReference type="GO" id="GO:0006412">
    <property type="term" value="P:translation"/>
    <property type="evidence" value="ECO:0007669"/>
    <property type="project" value="UniProtKB-UniRule"/>
</dbReference>
<dbReference type="FunFam" id="2.40.50.100:FF:000004">
    <property type="entry name" value="50S ribosomal protein L27"/>
    <property type="match status" value="1"/>
</dbReference>
<dbReference type="Gene3D" id="2.40.50.100">
    <property type="match status" value="1"/>
</dbReference>
<dbReference type="HAMAP" id="MF_00539">
    <property type="entry name" value="Ribosomal_bL27"/>
    <property type="match status" value="1"/>
</dbReference>
<dbReference type="InterPro" id="IPR001684">
    <property type="entry name" value="Ribosomal_bL27"/>
</dbReference>
<dbReference type="InterPro" id="IPR018261">
    <property type="entry name" value="Ribosomal_bL27_CS"/>
</dbReference>
<dbReference type="NCBIfam" id="TIGR00062">
    <property type="entry name" value="L27"/>
    <property type="match status" value="1"/>
</dbReference>
<dbReference type="PANTHER" id="PTHR15893:SF0">
    <property type="entry name" value="LARGE RIBOSOMAL SUBUNIT PROTEIN BL27M"/>
    <property type="match status" value="1"/>
</dbReference>
<dbReference type="PANTHER" id="PTHR15893">
    <property type="entry name" value="RIBOSOMAL PROTEIN L27"/>
    <property type="match status" value="1"/>
</dbReference>
<dbReference type="Pfam" id="PF01016">
    <property type="entry name" value="Ribosomal_L27"/>
    <property type="match status" value="1"/>
</dbReference>
<dbReference type="PRINTS" id="PR00063">
    <property type="entry name" value="RIBOSOMALL27"/>
</dbReference>
<dbReference type="SUPFAM" id="SSF110324">
    <property type="entry name" value="Ribosomal L27 protein-like"/>
    <property type="match status" value="1"/>
</dbReference>
<dbReference type="PROSITE" id="PS00831">
    <property type="entry name" value="RIBOSOMAL_L27"/>
    <property type="match status" value="1"/>
</dbReference>
<keyword id="KW-1185">Reference proteome</keyword>
<keyword id="KW-0687">Ribonucleoprotein</keyword>
<keyword id="KW-0689">Ribosomal protein</keyword>
<feature type="chain" id="PRO_1000017487" description="Large ribosomal subunit protein bL27">
    <location>
        <begin position="1"/>
        <end position="85"/>
    </location>
</feature>
<feature type="region of interest" description="Disordered" evidence="2">
    <location>
        <begin position="1"/>
        <end position="22"/>
    </location>
</feature>
<comment type="similarity">
    <text evidence="1">Belongs to the bacterial ribosomal protein bL27 family.</text>
</comment>
<reference key="1">
    <citation type="journal article" date="2009" name="BMC Microbiol.">
        <title>The genome sequence of Geobacter metallireducens: features of metabolism, physiology and regulation common and dissimilar to Geobacter sulfurreducens.</title>
        <authorList>
            <person name="Aklujkar M."/>
            <person name="Krushkal J."/>
            <person name="DiBartolo G."/>
            <person name="Lapidus A."/>
            <person name="Land M.L."/>
            <person name="Lovley D.R."/>
        </authorList>
    </citation>
    <scope>NUCLEOTIDE SEQUENCE [LARGE SCALE GENOMIC DNA]</scope>
    <source>
        <strain>ATCC 53774 / DSM 7210 / GS-15</strain>
    </source>
</reference>
<gene>
    <name evidence="1" type="primary">rpmA</name>
    <name type="ordered locus">Gmet_3196</name>
</gene>
<evidence type="ECO:0000255" key="1">
    <source>
        <dbReference type="HAMAP-Rule" id="MF_00539"/>
    </source>
</evidence>
<evidence type="ECO:0000256" key="2">
    <source>
        <dbReference type="SAM" id="MobiDB-lite"/>
    </source>
</evidence>
<evidence type="ECO:0000305" key="3"/>
<protein>
    <recommendedName>
        <fullName evidence="1">Large ribosomal subunit protein bL27</fullName>
    </recommendedName>
    <alternativeName>
        <fullName evidence="3">50S ribosomal protein L27</fullName>
    </alternativeName>
</protein>
<name>RL27_GEOMG</name>
<organism>
    <name type="scientific">Geobacter metallireducens (strain ATCC 53774 / DSM 7210 / GS-15)</name>
    <dbReference type="NCBI Taxonomy" id="269799"/>
    <lineage>
        <taxon>Bacteria</taxon>
        <taxon>Pseudomonadati</taxon>
        <taxon>Thermodesulfobacteriota</taxon>
        <taxon>Desulfuromonadia</taxon>
        <taxon>Geobacterales</taxon>
        <taxon>Geobacteraceae</taxon>
        <taxon>Geobacter</taxon>
    </lineage>
</organism>
<proteinExistence type="inferred from homology"/>